<feature type="chain" id="PRO_0000173365" description="Methylenomycin A resistance protein">
    <location>
        <begin position="1"/>
        <end position="475"/>
    </location>
</feature>
<feature type="transmembrane region" description="Helical" evidence="1">
    <location>
        <begin position="28"/>
        <end position="48"/>
    </location>
</feature>
<feature type="transmembrane region" description="Helical" evidence="1">
    <location>
        <begin position="65"/>
        <end position="85"/>
    </location>
</feature>
<feature type="transmembrane region" description="Helical" evidence="1">
    <location>
        <begin position="93"/>
        <end position="113"/>
    </location>
</feature>
<feature type="transmembrane region" description="Helical" evidence="1">
    <location>
        <begin position="123"/>
        <end position="143"/>
    </location>
</feature>
<feature type="transmembrane region" description="Helical" evidence="1">
    <location>
        <begin position="152"/>
        <end position="172"/>
    </location>
</feature>
<feature type="transmembrane region" description="Helical" evidence="1">
    <location>
        <begin position="173"/>
        <end position="193"/>
    </location>
</feature>
<feature type="transmembrane region" description="Helical" evidence="1">
    <location>
        <begin position="212"/>
        <end position="232"/>
    </location>
</feature>
<feature type="transmembrane region" description="Helical" evidence="1">
    <location>
        <begin position="240"/>
        <end position="260"/>
    </location>
</feature>
<feature type="transmembrane region" description="Helical" evidence="1">
    <location>
        <begin position="285"/>
        <end position="305"/>
    </location>
</feature>
<feature type="transmembrane region" description="Helical" evidence="1">
    <location>
        <begin position="314"/>
        <end position="334"/>
    </location>
</feature>
<feature type="transmembrane region" description="Helical" evidence="1">
    <location>
        <begin position="346"/>
        <end position="366"/>
    </location>
</feature>
<feature type="transmembrane region" description="Helical" evidence="1">
    <location>
        <begin position="371"/>
        <end position="391"/>
    </location>
</feature>
<feature type="transmembrane region" description="Helical" evidence="1">
    <location>
        <begin position="416"/>
        <end position="436"/>
    </location>
</feature>
<feature type="transmembrane region" description="Helical" evidence="1">
    <location>
        <begin position="439"/>
        <end position="459"/>
    </location>
</feature>
<name>MMR_STRCO</name>
<reference key="1">
    <citation type="journal article" date="1987" name="Gene">
        <title>Nucleotide sequence analysis reveals similarities between proteins determining methylenomycin A resistance in Streptomyces and tetracycline resistance in eubacteria.</title>
        <authorList>
            <person name="Neal R.J."/>
            <person name="Chater K.F."/>
        </authorList>
    </citation>
    <scope>NUCLEOTIDE SEQUENCE [GENOMIC DNA]</scope>
    <source>
        <strain>A3(2) / NRRL B-16638</strain>
    </source>
</reference>
<reference key="2">
    <citation type="submission" date="2000-03" db="EMBL/GenBank/DDBJ databases">
        <title>Genes involved in methylenomycin biosynthesis from plasmid SCP1 of Streptomyces coelicolor A3(2).</title>
        <authorList>
            <person name="Bruton C.J."/>
            <person name="Wietzorrek A."/>
            <person name="Hartley N."/>
            <person name="Woodburn L."/>
            <person name="Chater K.F."/>
        </authorList>
    </citation>
    <scope>NUCLEOTIDE SEQUENCE [GENOMIC DNA]</scope>
    <source>
        <strain>A3(2) / NRRL B-16638</strain>
    </source>
</reference>
<reference key="3">
    <citation type="journal article" date="2002" name="Nature">
        <title>Complete genome sequence of the model actinomycete Streptomyces coelicolor A3(2).</title>
        <authorList>
            <person name="Bentley S.D."/>
            <person name="Chater K.F."/>
            <person name="Cerdeno-Tarraga A.-M."/>
            <person name="Challis G.L."/>
            <person name="Thomson N.R."/>
            <person name="James K.D."/>
            <person name="Harris D.E."/>
            <person name="Quail M.A."/>
            <person name="Kieser H."/>
            <person name="Harper D."/>
            <person name="Bateman A."/>
            <person name="Brown S."/>
            <person name="Chandra G."/>
            <person name="Chen C.W."/>
            <person name="Collins M."/>
            <person name="Cronin A."/>
            <person name="Fraser A."/>
            <person name="Goble A."/>
            <person name="Hidalgo J."/>
            <person name="Hornsby T."/>
            <person name="Howarth S."/>
            <person name="Huang C.-H."/>
            <person name="Kieser T."/>
            <person name="Larke L."/>
            <person name="Murphy L.D."/>
            <person name="Oliver K."/>
            <person name="O'Neil S."/>
            <person name="Rabbinowitsch E."/>
            <person name="Rajandream M.A."/>
            <person name="Rutherford K.M."/>
            <person name="Rutter S."/>
            <person name="Seeger K."/>
            <person name="Saunders D."/>
            <person name="Sharp S."/>
            <person name="Squares R."/>
            <person name="Squares S."/>
            <person name="Taylor K."/>
            <person name="Warren T."/>
            <person name="Wietzorrek A."/>
            <person name="Woodward J.R."/>
            <person name="Barrell B.G."/>
            <person name="Parkhill J."/>
            <person name="Hopwood D.A."/>
        </authorList>
    </citation>
    <scope>NUCLEOTIDE SEQUENCE [LARGE SCALE GENOMIC DNA]</scope>
    <source>
        <strain>ATCC BAA-471 / A3(2) / M145</strain>
    </source>
</reference>
<gene>
    <name type="primary">mmr</name>
    <name type="ordered locus">SCP1.237c</name>
</gene>
<evidence type="ECO:0000255" key="1"/>
<evidence type="ECO:0000305" key="2"/>
<keyword id="KW-0046">Antibiotic resistance</keyword>
<keyword id="KW-1003">Cell membrane</keyword>
<keyword id="KW-0472">Membrane</keyword>
<keyword id="KW-0614">Plasmid</keyword>
<keyword id="KW-1185">Reference proteome</keyword>
<keyword id="KW-0812">Transmembrane</keyword>
<keyword id="KW-1133">Transmembrane helix</keyword>
<keyword id="KW-0813">Transport</keyword>
<dbReference type="EMBL" id="M18263">
    <property type="protein sequence ID" value="AAA98341.1"/>
    <property type="molecule type" value="Genomic_DNA"/>
</dbReference>
<dbReference type="EMBL" id="AJ276673">
    <property type="protein sequence ID" value="CAB82871.1"/>
    <property type="molecule type" value="Genomic_DNA"/>
</dbReference>
<dbReference type="EMBL" id="AL589148">
    <property type="protein sequence ID" value="CAC36763.1"/>
    <property type="molecule type" value="Genomic_DNA"/>
</dbReference>
<dbReference type="PIR" id="B29606">
    <property type="entry name" value="B29606"/>
</dbReference>
<dbReference type="RefSeq" id="NP_639847.1">
    <property type="nucleotide sequence ID" value="NC_003903.1"/>
</dbReference>
<dbReference type="SMR" id="P11545"/>
<dbReference type="STRING" id="100226.gene:17765747"/>
<dbReference type="KEGG" id="sco:SCP1.237c"/>
<dbReference type="PATRIC" id="fig|100226.15.peg.8184"/>
<dbReference type="HOGENOM" id="CLU_000960_28_2_11"/>
<dbReference type="InParanoid" id="P11545"/>
<dbReference type="OrthoDB" id="9781469at2"/>
<dbReference type="PhylomeDB" id="P11545"/>
<dbReference type="Proteomes" id="UP000001973">
    <property type="component" value="Plasmid SCP1"/>
</dbReference>
<dbReference type="GO" id="GO:0016020">
    <property type="term" value="C:membrane"/>
    <property type="evidence" value="ECO:0000318"/>
    <property type="project" value="GO_Central"/>
</dbReference>
<dbReference type="GO" id="GO:0005886">
    <property type="term" value="C:plasma membrane"/>
    <property type="evidence" value="ECO:0007669"/>
    <property type="project" value="UniProtKB-SubCell"/>
</dbReference>
<dbReference type="GO" id="GO:0022857">
    <property type="term" value="F:transmembrane transporter activity"/>
    <property type="evidence" value="ECO:0007669"/>
    <property type="project" value="InterPro"/>
</dbReference>
<dbReference type="GO" id="GO:0046677">
    <property type="term" value="P:response to antibiotic"/>
    <property type="evidence" value="ECO:0007669"/>
    <property type="project" value="UniProtKB-KW"/>
</dbReference>
<dbReference type="CDD" id="cd17321">
    <property type="entry name" value="MFS_MMR_MDR_like"/>
    <property type="match status" value="1"/>
</dbReference>
<dbReference type="Gene3D" id="1.20.1250.20">
    <property type="entry name" value="MFS general substrate transporter like domains"/>
    <property type="match status" value="1"/>
</dbReference>
<dbReference type="Gene3D" id="1.20.1720.10">
    <property type="entry name" value="Multidrug resistance protein D"/>
    <property type="match status" value="1"/>
</dbReference>
<dbReference type="InterPro" id="IPR011701">
    <property type="entry name" value="MFS"/>
</dbReference>
<dbReference type="InterPro" id="IPR020846">
    <property type="entry name" value="MFS_dom"/>
</dbReference>
<dbReference type="InterPro" id="IPR036259">
    <property type="entry name" value="MFS_trans_sf"/>
</dbReference>
<dbReference type="PANTHER" id="PTHR42718">
    <property type="entry name" value="MAJOR FACILITATOR SUPERFAMILY MULTIDRUG TRANSPORTER MFSC"/>
    <property type="match status" value="1"/>
</dbReference>
<dbReference type="PANTHER" id="PTHR42718:SF40">
    <property type="entry name" value="METHYLENOMYCIN A RESISTANCE PROTEIN"/>
    <property type="match status" value="1"/>
</dbReference>
<dbReference type="Pfam" id="PF07690">
    <property type="entry name" value="MFS_1"/>
    <property type="match status" value="1"/>
</dbReference>
<dbReference type="SUPFAM" id="SSF103473">
    <property type="entry name" value="MFS general substrate transporter"/>
    <property type="match status" value="1"/>
</dbReference>
<dbReference type="PROSITE" id="PS50850">
    <property type="entry name" value="MFS"/>
    <property type="match status" value="1"/>
</dbReference>
<geneLocation type="plasmid">
    <name>SCP1</name>
</geneLocation>
<accession>P11545</accession>
<sequence>MTTVRTGGAQTAEVPAGGRRDVPSGVKITALATGFVMATLDVTVVNVAGATIQESLDTTLTQLTWIVDGYVLTFASLLMLAGGLANRIGAKTVYLWGMGVFFLASLACALAPTAETLIAARLVQGAGAALFMPSSLSLLVFSFPEKRQRTRMLGLWSAIVATSSGLGPTVGGLMVSAFGWESIFLLNLPIGAIGMAMTYRYIAATESRATRLAVPGHLLWIVALAAVSFALIEGPQLGWTAGPVLTAYAVAVTAAALLALREHRVTNPVMPWQLFRGPGFTGANLVGFLFNFALFGSTFMLGLYFQHARGATPFQAGLELLPMTIFFPVANIVYARISARFSNGTLLTAFLLLAGAASLSMVTITASTPYWVVAVAVGVANIGAGIISPGMTAALVDAAGPENANVAGSVLNANRQIGSLVGIAAMGVVLHSTSDWDHGAAISFLAVGLAYLLGGLSAWRLIARPERRSAVTAAT</sequence>
<protein>
    <recommendedName>
        <fullName>Methylenomycin A resistance protein</fullName>
    </recommendedName>
    <alternativeName>
        <fullName>MMR peptide</fullName>
    </alternativeName>
</protein>
<organism>
    <name type="scientific">Streptomyces coelicolor (strain ATCC BAA-471 / A3(2) / M145)</name>
    <dbReference type="NCBI Taxonomy" id="100226"/>
    <lineage>
        <taxon>Bacteria</taxon>
        <taxon>Bacillati</taxon>
        <taxon>Actinomycetota</taxon>
        <taxon>Actinomycetes</taxon>
        <taxon>Kitasatosporales</taxon>
        <taxon>Streptomycetaceae</taxon>
        <taxon>Streptomyces</taxon>
        <taxon>Streptomyces albidoflavus group</taxon>
    </lineage>
</organism>
<proteinExistence type="inferred from homology"/>
<comment type="function">
    <text>Resistance to the epoxide antibiotic methylenomycin A; probably by mediating its efflux.</text>
</comment>
<comment type="subcellular location">
    <subcellularLocation>
        <location>Cell membrane</location>
        <topology>Multi-pass membrane protein</topology>
    </subcellularLocation>
</comment>
<comment type="similarity">
    <text evidence="2">Belongs to the major facilitator superfamily.</text>
</comment>